<sequence length="454" mass="52931">MSLCLWKQCLDRLQDELPNTEFSMWIRSLKAKLNNNILEIYAPNKFVLEWVKDKYLNHLKKILQDYCGTNSPLIKFEIYQIYKENKLKKNIENNNNNKNEKLIWSNIPKFKNLSYRSNINKRYNFQNFVEGKSNQLARSAAFQAARNPGNSYNPLFLYGATGLGKTHLLHAIGNEILSYKYDIKIIFMNSECFVQDMVKALKNNAIEKFKLYYRSVDALLIDDIQFFAHKERSQEEFFHTFNTLIEGNQQIILTSDRYPKEINGVEDRLKSRFSWGLTIAIDPPEIETRVAILIKKADQNNVILSNEVAFFIAKHLRSNVRELEGALNRVILNSRFTHRAITVDFAREALQDILAVQEKIITIDNIQKTVAKYYKIKVSDLLSKKRSRSIARPRQMAMAMAKKLTNHSLPEIGEAFSGRDHTTVLHACCKIEQLRKENHDIKKDFLNLIRTLSK</sequence>
<protein>
    <recommendedName>
        <fullName evidence="1">Chromosomal replication initiator protein DnaA</fullName>
    </recommendedName>
</protein>
<dbReference type="EMBL" id="BA000003">
    <property type="protein sequence ID" value="BAB12740.1"/>
    <property type="molecule type" value="Genomic_DNA"/>
</dbReference>
<dbReference type="RefSeq" id="NP_239854.1">
    <property type="nucleotide sequence ID" value="NC_002528.1"/>
</dbReference>
<dbReference type="RefSeq" id="WP_009873974.1">
    <property type="nucleotide sequence ID" value="NZ_AP036055.1"/>
</dbReference>
<dbReference type="SMR" id="P57128"/>
<dbReference type="STRING" id="563178.BUAP5A_012"/>
<dbReference type="EnsemblBacteria" id="BAB12740">
    <property type="protein sequence ID" value="BAB12740"/>
    <property type="gene ID" value="BAB12740"/>
</dbReference>
<dbReference type="KEGG" id="buc:BU012"/>
<dbReference type="PATRIC" id="fig|107806.10.peg.25"/>
<dbReference type="eggNOG" id="COG0593">
    <property type="taxonomic scope" value="Bacteria"/>
</dbReference>
<dbReference type="HOGENOM" id="CLU_026910_0_1_6"/>
<dbReference type="Proteomes" id="UP000001806">
    <property type="component" value="Chromosome"/>
</dbReference>
<dbReference type="GO" id="GO:0005737">
    <property type="term" value="C:cytoplasm"/>
    <property type="evidence" value="ECO:0007669"/>
    <property type="project" value="UniProtKB-SubCell"/>
</dbReference>
<dbReference type="GO" id="GO:0005886">
    <property type="term" value="C:plasma membrane"/>
    <property type="evidence" value="ECO:0007669"/>
    <property type="project" value="TreeGrafter"/>
</dbReference>
<dbReference type="GO" id="GO:0005524">
    <property type="term" value="F:ATP binding"/>
    <property type="evidence" value="ECO:0007669"/>
    <property type="project" value="UniProtKB-UniRule"/>
</dbReference>
<dbReference type="GO" id="GO:0016887">
    <property type="term" value="F:ATP hydrolysis activity"/>
    <property type="evidence" value="ECO:0007669"/>
    <property type="project" value="InterPro"/>
</dbReference>
<dbReference type="GO" id="GO:0003688">
    <property type="term" value="F:DNA replication origin binding"/>
    <property type="evidence" value="ECO:0007669"/>
    <property type="project" value="UniProtKB-UniRule"/>
</dbReference>
<dbReference type="GO" id="GO:0008289">
    <property type="term" value="F:lipid binding"/>
    <property type="evidence" value="ECO:0007669"/>
    <property type="project" value="UniProtKB-KW"/>
</dbReference>
<dbReference type="GO" id="GO:0006270">
    <property type="term" value="P:DNA replication initiation"/>
    <property type="evidence" value="ECO:0007669"/>
    <property type="project" value="UniProtKB-UniRule"/>
</dbReference>
<dbReference type="GO" id="GO:0006275">
    <property type="term" value="P:regulation of DNA replication"/>
    <property type="evidence" value="ECO:0007669"/>
    <property type="project" value="UniProtKB-UniRule"/>
</dbReference>
<dbReference type="CDD" id="cd00009">
    <property type="entry name" value="AAA"/>
    <property type="match status" value="1"/>
</dbReference>
<dbReference type="CDD" id="cd06571">
    <property type="entry name" value="Bac_DnaA_C"/>
    <property type="match status" value="1"/>
</dbReference>
<dbReference type="FunFam" id="1.10.1750.10:FF:000001">
    <property type="entry name" value="Chromosomal replication initiator protein DnaA"/>
    <property type="match status" value="1"/>
</dbReference>
<dbReference type="FunFam" id="1.10.8.60:FF:000003">
    <property type="entry name" value="Chromosomal replication initiator protein DnaA"/>
    <property type="match status" value="1"/>
</dbReference>
<dbReference type="FunFam" id="3.40.50.300:FF:000103">
    <property type="entry name" value="Chromosomal replication initiator protein DnaA"/>
    <property type="match status" value="1"/>
</dbReference>
<dbReference type="Gene3D" id="1.10.1750.10">
    <property type="match status" value="1"/>
</dbReference>
<dbReference type="Gene3D" id="1.10.8.60">
    <property type="match status" value="1"/>
</dbReference>
<dbReference type="Gene3D" id="3.30.300.180">
    <property type="match status" value="1"/>
</dbReference>
<dbReference type="Gene3D" id="3.40.50.300">
    <property type="entry name" value="P-loop containing nucleotide triphosphate hydrolases"/>
    <property type="match status" value="1"/>
</dbReference>
<dbReference type="HAMAP" id="MF_00377">
    <property type="entry name" value="DnaA_bact"/>
    <property type="match status" value="1"/>
</dbReference>
<dbReference type="InterPro" id="IPR003593">
    <property type="entry name" value="AAA+_ATPase"/>
</dbReference>
<dbReference type="InterPro" id="IPR001957">
    <property type="entry name" value="Chromosome_initiator_DnaA"/>
</dbReference>
<dbReference type="InterPro" id="IPR020591">
    <property type="entry name" value="Chromosome_initiator_DnaA-like"/>
</dbReference>
<dbReference type="InterPro" id="IPR018312">
    <property type="entry name" value="Chromosome_initiator_DnaA_CS"/>
</dbReference>
<dbReference type="InterPro" id="IPR013159">
    <property type="entry name" value="DnaA_C"/>
</dbReference>
<dbReference type="InterPro" id="IPR013317">
    <property type="entry name" value="DnaA_dom"/>
</dbReference>
<dbReference type="InterPro" id="IPR024633">
    <property type="entry name" value="DnaA_N_dom"/>
</dbReference>
<dbReference type="InterPro" id="IPR038454">
    <property type="entry name" value="DnaA_N_sf"/>
</dbReference>
<dbReference type="InterPro" id="IPR027417">
    <property type="entry name" value="P-loop_NTPase"/>
</dbReference>
<dbReference type="InterPro" id="IPR010921">
    <property type="entry name" value="Trp_repressor/repl_initiator"/>
</dbReference>
<dbReference type="NCBIfam" id="TIGR00362">
    <property type="entry name" value="DnaA"/>
    <property type="match status" value="1"/>
</dbReference>
<dbReference type="PANTHER" id="PTHR30050">
    <property type="entry name" value="CHROMOSOMAL REPLICATION INITIATOR PROTEIN DNAA"/>
    <property type="match status" value="1"/>
</dbReference>
<dbReference type="PANTHER" id="PTHR30050:SF2">
    <property type="entry name" value="CHROMOSOMAL REPLICATION INITIATOR PROTEIN DNAA"/>
    <property type="match status" value="1"/>
</dbReference>
<dbReference type="Pfam" id="PF00308">
    <property type="entry name" value="Bac_DnaA"/>
    <property type="match status" value="1"/>
</dbReference>
<dbReference type="Pfam" id="PF08299">
    <property type="entry name" value="Bac_DnaA_C"/>
    <property type="match status" value="1"/>
</dbReference>
<dbReference type="Pfam" id="PF11638">
    <property type="entry name" value="DnaA_N"/>
    <property type="match status" value="1"/>
</dbReference>
<dbReference type="PRINTS" id="PR00051">
    <property type="entry name" value="DNAA"/>
</dbReference>
<dbReference type="SMART" id="SM00382">
    <property type="entry name" value="AAA"/>
    <property type="match status" value="1"/>
</dbReference>
<dbReference type="SMART" id="SM00760">
    <property type="entry name" value="Bac_DnaA_C"/>
    <property type="match status" value="1"/>
</dbReference>
<dbReference type="SUPFAM" id="SSF52540">
    <property type="entry name" value="P-loop containing nucleoside triphosphate hydrolases"/>
    <property type="match status" value="1"/>
</dbReference>
<dbReference type="SUPFAM" id="SSF48295">
    <property type="entry name" value="TrpR-like"/>
    <property type="match status" value="1"/>
</dbReference>
<dbReference type="PROSITE" id="PS01008">
    <property type="entry name" value="DNAA"/>
    <property type="match status" value="1"/>
</dbReference>
<evidence type="ECO:0000255" key="1">
    <source>
        <dbReference type="HAMAP-Rule" id="MF_00377"/>
    </source>
</evidence>
<gene>
    <name evidence="1" type="primary">dnaA</name>
    <name type="ordered locus">BU012</name>
</gene>
<comment type="function">
    <text evidence="1">Plays an essential role in the initiation and regulation of chromosomal replication. ATP-DnaA binds to the origin of replication (oriC) to initiate formation of the DNA replication initiation complex once per cell cycle. Binds the DnaA box (a 9 base pair repeat at the origin) and separates the double-stranded (ds)DNA. Forms a right-handed helical filament on oriC DNA; dsDNA binds to the exterior of the filament while single-stranded (ss)DNA is stabiized in the filament's interior. The ATP-DnaA-oriC complex binds and stabilizes one strand of the AT-rich DNA unwinding element (DUE), permitting loading of DNA polymerase. After initiation quickly degrades to an ADP-DnaA complex that is not apt for DNA replication. Binds acidic phospholipids.</text>
</comment>
<comment type="subunit">
    <text evidence="1">Oligomerizes as a right-handed, spiral filament on DNA at oriC.</text>
</comment>
<comment type="subcellular location">
    <subcellularLocation>
        <location evidence="1">Cytoplasm</location>
    </subcellularLocation>
</comment>
<comment type="domain">
    <text evidence="1">Domain I is involved in oligomerization and binding regulators, domain II is flexibile and of varying length in different bacteria, domain III forms the AAA+ region, while domain IV binds dsDNA.</text>
</comment>
<comment type="similarity">
    <text evidence="1">Belongs to the DnaA family.</text>
</comment>
<organism>
    <name type="scientific">Buchnera aphidicola subsp. Acyrthosiphon pisum (strain APS)</name>
    <name type="common">Acyrthosiphon pisum symbiotic bacterium</name>
    <dbReference type="NCBI Taxonomy" id="107806"/>
    <lineage>
        <taxon>Bacteria</taxon>
        <taxon>Pseudomonadati</taxon>
        <taxon>Pseudomonadota</taxon>
        <taxon>Gammaproteobacteria</taxon>
        <taxon>Enterobacterales</taxon>
        <taxon>Erwiniaceae</taxon>
        <taxon>Buchnera</taxon>
    </lineage>
</organism>
<feature type="chain" id="PRO_0000114148" description="Chromosomal replication initiator protein DnaA">
    <location>
        <begin position="1"/>
        <end position="454"/>
    </location>
</feature>
<feature type="region of interest" description="Domain I, interacts with DnaA modulators" evidence="1">
    <location>
        <begin position="1"/>
        <end position="79"/>
    </location>
</feature>
<feature type="region of interest" description="Domain II" evidence="1">
    <location>
        <begin position="79"/>
        <end position="117"/>
    </location>
</feature>
<feature type="region of interest" description="Domain III, AAA+ region" evidence="1">
    <location>
        <begin position="118"/>
        <end position="334"/>
    </location>
</feature>
<feature type="region of interest" description="Domain IV, binds dsDNA" evidence="1">
    <location>
        <begin position="335"/>
        <end position="454"/>
    </location>
</feature>
<feature type="binding site" evidence="1">
    <location>
        <position position="162"/>
    </location>
    <ligand>
        <name>ATP</name>
        <dbReference type="ChEBI" id="CHEBI:30616"/>
    </ligand>
</feature>
<feature type="binding site" evidence="1">
    <location>
        <position position="164"/>
    </location>
    <ligand>
        <name>ATP</name>
        <dbReference type="ChEBI" id="CHEBI:30616"/>
    </ligand>
</feature>
<feature type="binding site" evidence="1">
    <location>
        <position position="165"/>
    </location>
    <ligand>
        <name>ATP</name>
        <dbReference type="ChEBI" id="CHEBI:30616"/>
    </ligand>
</feature>
<feature type="binding site" evidence="1">
    <location>
        <position position="166"/>
    </location>
    <ligand>
        <name>ATP</name>
        <dbReference type="ChEBI" id="CHEBI:30616"/>
    </ligand>
</feature>
<reference key="1">
    <citation type="journal article" date="2000" name="Nature">
        <title>Genome sequence of the endocellular bacterial symbiont of aphids Buchnera sp. APS.</title>
        <authorList>
            <person name="Shigenobu S."/>
            <person name="Watanabe H."/>
            <person name="Hattori M."/>
            <person name="Sakaki Y."/>
            <person name="Ishikawa H."/>
        </authorList>
    </citation>
    <scope>NUCLEOTIDE SEQUENCE [LARGE SCALE GENOMIC DNA]</scope>
    <source>
        <strain>APS</strain>
    </source>
</reference>
<proteinExistence type="inferred from homology"/>
<keyword id="KW-0067">ATP-binding</keyword>
<keyword id="KW-0963">Cytoplasm</keyword>
<keyword id="KW-0235">DNA replication</keyword>
<keyword id="KW-0238">DNA-binding</keyword>
<keyword id="KW-0446">Lipid-binding</keyword>
<keyword id="KW-0547">Nucleotide-binding</keyword>
<keyword id="KW-1185">Reference proteome</keyword>
<accession>P57128</accession>
<name>DNAA_BUCAI</name>